<sequence>MKIYEGRLTAEGLKVGIIVSRFNEFITSKLLAGSIDCLKRHGAKEDNIEVCWVPGAFEIPVIAKKMASKGKYDAVICLGAVIRGATPHFDYVSSEVSKGVAHVSLDKEVPVIFGVLTTDTIEQAIERAGTKAGNKGYDAAMSAIEMSNLMKVLD</sequence>
<gene>
    <name evidence="1" type="primary">ribH</name>
    <name type="ordered locus">CLM_3259</name>
</gene>
<comment type="function">
    <text evidence="1">Catalyzes the formation of 6,7-dimethyl-8-ribityllumazine by condensation of 5-amino-6-(D-ribitylamino)uracil with 3,4-dihydroxy-2-butanone 4-phosphate. This is the penultimate step in the biosynthesis of riboflavin.</text>
</comment>
<comment type="catalytic activity">
    <reaction evidence="1">
        <text>(2S)-2-hydroxy-3-oxobutyl phosphate + 5-amino-6-(D-ribitylamino)uracil = 6,7-dimethyl-8-(1-D-ribityl)lumazine + phosphate + 2 H2O + H(+)</text>
        <dbReference type="Rhea" id="RHEA:26152"/>
        <dbReference type="ChEBI" id="CHEBI:15377"/>
        <dbReference type="ChEBI" id="CHEBI:15378"/>
        <dbReference type="ChEBI" id="CHEBI:15934"/>
        <dbReference type="ChEBI" id="CHEBI:43474"/>
        <dbReference type="ChEBI" id="CHEBI:58201"/>
        <dbReference type="ChEBI" id="CHEBI:58830"/>
        <dbReference type="EC" id="2.5.1.78"/>
    </reaction>
</comment>
<comment type="pathway">
    <text evidence="1">Cofactor biosynthesis; riboflavin biosynthesis; riboflavin from 2-hydroxy-3-oxobutyl phosphate and 5-amino-6-(D-ribitylamino)uracil: step 1/2.</text>
</comment>
<comment type="similarity">
    <text evidence="1">Belongs to the DMRL synthase family.</text>
</comment>
<feature type="chain" id="PRO_1000195470" description="6,7-dimethyl-8-ribityllumazine synthase">
    <location>
        <begin position="1"/>
        <end position="154"/>
    </location>
</feature>
<feature type="active site" description="Proton donor" evidence="1">
    <location>
        <position position="88"/>
    </location>
</feature>
<feature type="binding site" evidence="1">
    <location>
        <position position="22"/>
    </location>
    <ligand>
        <name>5-amino-6-(D-ribitylamino)uracil</name>
        <dbReference type="ChEBI" id="CHEBI:15934"/>
    </ligand>
</feature>
<feature type="binding site" evidence="1">
    <location>
        <begin position="56"/>
        <end position="58"/>
    </location>
    <ligand>
        <name>5-amino-6-(D-ribitylamino)uracil</name>
        <dbReference type="ChEBI" id="CHEBI:15934"/>
    </ligand>
</feature>
<feature type="binding site" evidence="1">
    <location>
        <begin position="80"/>
        <end position="82"/>
    </location>
    <ligand>
        <name>5-amino-6-(D-ribitylamino)uracil</name>
        <dbReference type="ChEBI" id="CHEBI:15934"/>
    </ligand>
</feature>
<feature type="binding site" evidence="1">
    <location>
        <begin position="85"/>
        <end position="86"/>
    </location>
    <ligand>
        <name>(2S)-2-hydroxy-3-oxobutyl phosphate</name>
        <dbReference type="ChEBI" id="CHEBI:58830"/>
    </ligand>
</feature>
<feature type="binding site" evidence="1">
    <location>
        <position position="113"/>
    </location>
    <ligand>
        <name>5-amino-6-(D-ribitylamino)uracil</name>
        <dbReference type="ChEBI" id="CHEBI:15934"/>
    </ligand>
</feature>
<feature type="binding site" evidence="1">
    <location>
        <position position="127"/>
    </location>
    <ligand>
        <name>(2S)-2-hydroxy-3-oxobutyl phosphate</name>
        <dbReference type="ChEBI" id="CHEBI:58830"/>
    </ligand>
</feature>
<organism>
    <name type="scientific">Clostridium botulinum (strain Kyoto / Type A2)</name>
    <dbReference type="NCBI Taxonomy" id="536232"/>
    <lineage>
        <taxon>Bacteria</taxon>
        <taxon>Bacillati</taxon>
        <taxon>Bacillota</taxon>
        <taxon>Clostridia</taxon>
        <taxon>Eubacteriales</taxon>
        <taxon>Clostridiaceae</taxon>
        <taxon>Clostridium</taxon>
    </lineage>
</organism>
<accession>C1FV67</accession>
<name>RISB_CLOBJ</name>
<proteinExistence type="inferred from homology"/>
<keyword id="KW-0686">Riboflavin biosynthesis</keyword>
<keyword id="KW-0808">Transferase</keyword>
<dbReference type="EC" id="2.5.1.78" evidence="1"/>
<dbReference type="EMBL" id="CP001581">
    <property type="protein sequence ID" value="ACO85987.1"/>
    <property type="molecule type" value="Genomic_DNA"/>
</dbReference>
<dbReference type="SMR" id="C1FV67"/>
<dbReference type="KEGG" id="cby:CLM_3259"/>
<dbReference type="eggNOG" id="COG0054">
    <property type="taxonomic scope" value="Bacteria"/>
</dbReference>
<dbReference type="HOGENOM" id="CLU_089358_1_1_9"/>
<dbReference type="UniPathway" id="UPA00275">
    <property type="reaction ID" value="UER00404"/>
</dbReference>
<dbReference type="Proteomes" id="UP000001374">
    <property type="component" value="Chromosome"/>
</dbReference>
<dbReference type="GO" id="GO:0005829">
    <property type="term" value="C:cytosol"/>
    <property type="evidence" value="ECO:0007669"/>
    <property type="project" value="TreeGrafter"/>
</dbReference>
<dbReference type="GO" id="GO:0009349">
    <property type="term" value="C:riboflavin synthase complex"/>
    <property type="evidence" value="ECO:0007669"/>
    <property type="project" value="InterPro"/>
</dbReference>
<dbReference type="GO" id="GO:0000906">
    <property type="term" value="F:6,7-dimethyl-8-ribityllumazine synthase activity"/>
    <property type="evidence" value="ECO:0007669"/>
    <property type="project" value="UniProtKB-UniRule"/>
</dbReference>
<dbReference type="GO" id="GO:0009231">
    <property type="term" value="P:riboflavin biosynthetic process"/>
    <property type="evidence" value="ECO:0007669"/>
    <property type="project" value="UniProtKB-UniRule"/>
</dbReference>
<dbReference type="CDD" id="cd09209">
    <property type="entry name" value="Lumazine_synthase-I"/>
    <property type="match status" value="1"/>
</dbReference>
<dbReference type="FunFam" id="3.40.50.960:FF:000001">
    <property type="entry name" value="6,7-dimethyl-8-ribityllumazine synthase"/>
    <property type="match status" value="1"/>
</dbReference>
<dbReference type="Gene3D" id="3.40.50.960">
    <property type="entry name" value="Lumazine/riboflavin synthase"/>
    <property type="match status" value="1"/>
</dbReference>
<dbReference type="HAMAP" id="MF_00178">
    <property type="entry name" value="Lumazine_synth"/>
    <property type="match status" value="1"/>
</dbReference>
<dbReference type="InterPro" id="IPR034964">
    <property type="entry name" value="LS"/>
</dbReference>
<dbReference type="InterPro" id="IPR002180">
    <property type="entry name" value="LS/RS"/>
</dbReference>
<dbReference type="InterPro" id="IPR036467">
    <property type="entry name" value="LS/RS_sf"/>
</dbReference>
<dbReference type="NCBIfam" id="TIGR00114">
    <property type="entry name" value="lumazine-synth"/>
    <property type="match status" value="1"/>
</dbReference>
<dbReference type="NCBIfam" id="NF000812">
    <property type="entry name" value="PRK00061.1-4"/>
    <property type="match status" value="1"/>
</dbReference>
<dbReference type="PANTHER" id="PTHR21058:SF0">
    <property type="entry name" value="6,7-DIMETHYL-8-RIBITYLLUMAZINE SYNTHASE"/>
    <property type="match status" value="1"/>
</dbReference>
<dbReference type="PANTHER" id="PTHR21058">
    <property type="entry name" value="6,7-DIMETHYL-8-RIBITYLLUMAZINE SYNTHASE DMRL SYNTHASE LUMAZINE SYNTHASE"/>
    <property type="match status" value="1"/>
</dbReference>
<dbReference type="Pfam" id="PF00885">
    <property type="entry name" value="DMRL_synthase"/>
    <property type="match status" value="1"/>
</dbReference>
<dbReference type="SUPFAM" id="SSF52121">
    <property type="entry name" value="Lumazine synthase"/>
    <property type="match status" value="1"/>
</dbReference>
<reference key="1">
    <citation type="submission" date="2008-10" db="EMBL/GenBank/DDBJ databases">
        <title>Genome sequence of Clostridium botulinum A2 Kyoto.</title>
        <authorList>
            <person name="Shrivastava S."/>
            <person name="Brinkac L.M."/>
            <person name="Brown J.L."/>
            <person name="Bruce D."/>
            <person name="Detter C.C."/>
            <person name="Johnson E.A."/>
            <person name="Munk C.A."/>
            <person name="Smith L.A."/>
            <person name="Smith T.J."/>
            <person name="Sutton G."/>
            <person name="Brettin T.S."/>
        </authorList>
    </citation>
    <scope>NUCLEOTIDE SEQUENCE [LARGE SCALE GENOMIC DNA]</scope>
    <source>
        <strain>Kyoto / Type A2</strain>
    </source>
</reference>
<evidence type="ECO:0000255" key="1">
    <source>
        <dbReference type="HAMAP-Rule" id="MF_00178"/>
    </source>
</evidence>
<protein>
    <recommendedName>
        <fullName evidence="1">6,7-dimethyl-8-ribityllumazine synthase</fullName>
        <shortName evidence="1">DMRL synthase</shortName>
        <shortName evidence="1">LS</shortName>
        <shortName evidence="1">Lumazine synthase</shortName>
        <ecNumber evidence="1">2.5.1.78</ecNumber>
    </recommendedName>
</protein>